<reference key="1">
    <citation type="submission" date="2007-02" db="EMBL/GenBank/DDBJ databases">
        <title>Complete sequence of chromosome 1 of Rhodobacter sphaeroides ATCC 17029.</title>
        <authorList>
            <person name="Copeland A."/>
            <person name="Lucas S."/>
            <person name="Lapidus A."/>
            <person name="Barry K."/>
            <person name="Detter J.C."/>
            <person name="Glavina del Rio T."/>
            <person name="Hammon N."/>
            <person name="Israni S."/>
            <person name="Dalin E."/>
            <person name="Tice H."/>
            <person name="Pitluck S."/>
            <person name="Kiss H."/>
            <person name="Brettin T."/>
            <person name="Bruce D."/>
            <person name="Han C."/>
            <person name="Tapia R."/>
            <person name="Gilna P."/>
            <person name="Schmutz J."/>
            <person name="Larimer F."/>
            <person name="Land M."/>
            <person name="Hauser L."/>
            <person name="Kyrpides N."/>
            <person name="Mikhailova N."/>
            <person name="Richardson P."/>
            <person name="Mackenzie C."/>
            <person name="Choudhary M."/>
            <person name="Donohue T.J."/>
            <person name="Kaplan S."/>
        </authorList>
    </citation>
    <scope>NUCLEOTIDE SEQUENCE [LARGE SCALE GENOMIC DNA]</scope>
    <source>
        <strain>ATCC 17029 / ATH 2.4.9</strain>
    </source>
</reference>
<organism>
    <name type="scientific">Cereibacter sphaeroides (strain ATCC 17029 / ATH 2.4.9)</name>
    <name type="common">Rhodobacter sphaeroides</name>
    <dbReference type="NCBI Taxonomy" id="349101"/>
    <lineage>
        <taxon>Bacteria</taxon>
        <taxon>Pseudomonadati</taxon>
        <taxon>Pseudomonadota</taxon>
        <taxon>Alphaproteobacteria</taxon>
        <taxon>Rhodobacterales</taxon>
        <taxon>Paracoccaceae</taxon>
        <taxon>Cereibacter</taxon>
    </lineage>
</organism>
<keyword id="KW-0012">Acyltransferase</keyword>
<keyword id="KW-0028">Amino-acid biosynthesis</keyword>
<keyword id="KW-0963">Cytoplasm</keyword>
<keyword id="KW-0486">Methionine biosynthesis</keyword>
<keyword id="KW-0808">Transferase</keyword>
<accession>A3PK84</accession>
<protein>
    <recommendedName>
        <fullName evidence="1">Homoserine O-acetyltransferase</fullName>
        <shortName evidence="1">HAT</shortName>
        <ecNumber evidence="1">2.3.1.31</ecNumber>
    </recommendedName>
    <alternativeName>
        <fullName evidence="1">Homoserine transacetylase</fullName>
        <shortName evidence="1">HTA</shortName>
    </alternativeName>
</protein>
<proteinExistence type="inferred from homology"/>
<feature type="chain" id="PRO_1000021826" description="Homoserine O-acetyltransferase">
    <location>
        <begin position="1"/>
        <end position="305"/>
    </location>
</feature>
<feature type="active site" description="Acyl-thioester intermediate" evidence="1">
    <location>
        <position position="142"/>
    </location>
</feature>
<feature type="active site" description="Proton acceptor" evidence="1">
    <location>
        <position position="235"/>
    </location>
</feature>
<feature type="active site" evidence="1">
    <location>
        <position position="237"/>
    </location>
</feature>
<feature type="binding site" evidence="1">
    <location>
        <position position="163"/>
    </location>
    <ligand>
        <name>substrate</name>
    </ligand>
</feature>
<feature type="binding site" evidence="1">
    <location>
        <position position="192"/>
    </location>
    <ligand>
        <name>substrate</name>
    </ligand>
</feature>
<feature type="binding site" evidence="1">
    <location>
        <position position="249"/>
    </location>
    <ligand>
        <name>substrate</name>
    </ligand>
</feature>
<feature type="site" description="Important for acyl-CoA specificity" evidence="1">
    <location>
        <position position="111"/>
    </location>
</feature>
<feature type="site" description="Important for substrate specificity" evidence="1">
    <location>
        <position position="192"/>
    </location>
</feature>
<name>METAA_CERS1</name>
<sequence length="305" mass="35171">MPITLPATLPAFDVLTHEGVMVMTPERAARQDIRPLRIGLLNLMPKKIQTENQFARLIGATPLQIDFQLIRMTEHQTKNTAAEHMEAFYRPFQEVKHEKFDGLIITGAPIEHLDFADVTYWDELCEVMDWTQTNVQSTFGVCWGGMAMIYHFHRVQKHRLQAKAFGCFRHRNVAPTSPYLRGFSDDFVIPVSRWTEMRQAEIDAAPGLRTLLASDEAGPCLVEDPGHRALYIFNHFEYDSDTLKQEYDRDVANGKPINVPANYYPDDDPSKPPLNRWRSHAHLLYGNWINEIYQSTPYDPQQIGR</sequence>
<evidence type="ECO:0000255" key="1">
    <source>
        <dbReference type="HAMAP-Rule" id="MF_00295"/>
    </source>
</evidence>
<gene>
    <name evidence="1" type="primary">metAA</name>
    <name type="ordered locus">Rsph17029_1640</name>
</gene>
<comment type="function">
    <text evidence="1">Transfers an acetyl group from acetyl-CoA to L-homoserine, forming acetyl-L-homoserine.</text>
</comment>
<comment type="catalytic activity">
    <reaction evidence="1">
        <text>L-homoserine + acetyl-CoA = O-acetyl-L-homoserine + CoA</text>
        <dbReference type="Rhea" id="RHEA:13701"/>
        <dbReference type="ChEBI" id="CHEBI:57287"/>
        <dbReference type="ChEBI" id="CHEBI:57288"/>
        <dbReference type="ChEBI" id="CHEBI:57476"/>
        <dbReference type="ChEBI" id="CHEBI:57716"/>
        <dbReference type="EC" id="2.3.1.31"/>
    </reaction>
</comment>
<comment type="pathway">
    <text evidence="1">Amino-acid biosynthesis; L-methionine biosynthesis via de novo pathway; O-acetyl-L-homoserine from L-homoserine: step 1/1.</text>
</comment>
<comment type="subcellular location">
    <subcellularLocation>
        <location evidence="1">Cytoplasm</location>
    </subcellularLocation>
</comment>
<comment type="similarity">
    <text evidence="1">Belongs to the MetA family.</text>
</comment>
<dbReference type="EC" id="2.3.1.31" evidence="1"/>
<dbReference type="EMBL" id="CP000577">
    <property type="protein sequence ID" value="ABN76750.1"/>
    <property type="molecule type" value="Genomic_DNA"/>
</dbReference>
<dbReference type="SMR" id="A3PK84"/>
<dbReference type="KEGG" id="rsh:Rsph17029_1640"/>
<dbReference type="HOGENOM" id="CLU_057851_0_1_5"/>
<dbReference type="UniPathway" id="UPA00051">
    <property type="reaction ID" value="UER00074"/>
</dbReference>
<dbReference type="GO" id="GO:0005737">
    <property type="term" value="C:cytoplasm"/>
    <property type="evidence" value="ECO:0007669"/>
    <property type="project" value="UniProtKB-SubCell"/>
</dbReference>
<dbReference type="GO" id="GO:0004414">
    <property type="term" value="F:homoserine O-acetyltransferase activity"/>
    <property type="evidence" value="ECO:0007669"/>
    <property type="project" value="UniProtKB-EC"/>
</dbReference>
<dbReference type="GO" id="GO:0008899">
    <property type="term" value="F:homoserine O-succinyltransferase activity"/>
    <property type="evidence" value="ECO:0007669"/>
    <property type="project" value="UniProtKB-UniRule"/>
</dbReference>
<dbReference type="GO" id="GO:0019281">
    <property type="term" value="P:L-methionine biosynthetic process from homoserine via O-succinyl-L-homoserine and cystathionine"/>
    <property type="evidence" value="ECO:0007669"/>
    <property type="project" value="InterPro"/>
</dbReference>
<dbReference type="CDD" id="cd03131">
    <property type="entry name" value="GATase1_HTS"/>
    <property type="match status" value="1"/>
</dbReference>
<dbReference type="Gene3D" id="3.40.50.880">
    <property type="match status" value="1"/>
</dbReference>
<dbReference type="HAMAP" id="MF_00295">
    <property type="entry name" value="MetA_acyltransf"/>
    <property type="match status" value="1"/>
</dbReference>
<dbReference type="InterPro" id="IPR029062">
    <property type="entry name" value="Class_I_gatase-like"/>
</dbReference>
<dbReference type="InterPro" id="IPR005697">
    <property type="entry name" value="HST_MetA"/>
</dbReference>
<dbReference type="InterPro" id="IPR033752">
    <property type="entry name" value="MetA_family"/>
</dbReference>
<dbReference type="NCBIfam" id="TIGR01001">
    <property type="entry name" value="metA"/>
    <property type="match status" value="1"/>
</dbReference>
<dbReference type="PANTHER" id="PTHR20919">
    <property type="entry name" value="HOMOSERINE O-SUCCINYLTRANSFERASE"/>
    <property type="match status" value="1"/>
</dbReference>
<dbReference type="PANTHER" id="PTHR20919:SF0">
    <property type="entry name" value="HOMOSERINE O-SUCCINYLTRANSFERASE"/>
    <property type="match status" value="1"/>
</dbReference>
<dbReference type="Pfam" id="PF04204">
    <property type="entry name" value="HTS"/>
    <property type="match status" value="1"/>
</dbReference>
<dbReference type="PIRSF" id="PIRSF000450">
    <property type="entry name" value="H_ser_succinyltr"/>
    <property type="match status" value="1"/>
</dbReference>
<dbReference type="SUPFAM" id="SSF52317">
    <property type="entry name" value="Class I glutamine amidotransferase-like"/>
    <property type="match status" value="1"/>
</dbReference>